<keyword id="KW-0156">Chromatin regulator</keyword>
<keyword id="KW-0378">Hydrolase</keyword>
<keyword id="KW-0539">Nucleus</keyword>
<keyword id="KW-0645">Protease</keyword>
<keyword id="KW-1185">Reference proteome</keyword>
<keyword id="KW-0788">Thiol protease</keyword>
<keyword id="KW-0833">Ubl conjugation pathway</keyword>
<accession>B4LQ24</accession>
<reference key="1">
    <citation type="journal article" date="2007" name="Nature">
        <title>Evolution of genes and genomes on the Drosophila phylogeny.</title>
        <authorList>
            <consortium name="Drosophila 12 genomes consortium"/>
        </authorList>
    </citation>
    <scope>NUCLEOTIDE SEQUENCE [LARGE SCALE GENOMIC DNA]</scope>
    <source>
        <strain>Tucson 15010-1051.87</strain>
    </source>
</reference>
<feature type="chain" id="PRO_0000395834" description="Ubiquitin carboxyl-terminal hydrolase calypso">
    <location>
        <begin position="1"/>
        <end position="462"/>
    </location>
</feature>
<feature type="domain" description="UCH catalytic" evidence="2">
    <location>
        <begin position="29"/>
        <end position="260"/>
    </location>
</feature>
<feature type="domain" description="ULD" evidence="3">
    <location>
        <begin position="357"/>
        <end position="385"/>
    </location>
</feature>
<feature type="region of interest" description="Positively charged C-terminal tail required for binding nucleosomes" evidence="1">
    <location>
        <begin position="387"/>
        <end position="462"/>
    </location>
</feature>
<feature type="region of interest" description="Disordered" evidence="4">
    <location>
        <begin position="394"/>
        <end position="462"/>
    </location>
</feature>
<feature type="compositionally biased region" description="Low complexity" evidence="4">
    <location>
        <begin position="399"/>
        <end position="447"/>
    </location>
</feature>
<feature type="compositionally biased region" description="Basic residues" evidence="4">
    <location>
        <begin position="448"/>
        <end position="462"/>
    </location>
</feature>
<feature type="active site" description="Nucleophile" evidence="2">
    <location>
        <position position="115"/>
    </location>
</feature>
<feature type="active site" description="Proton donor" evidence="2">
    <location>
        <position position="197"/>
    </location>
</feature>
<feature type="site" description="Transition state stabilizer" evidence="2">
    <location>
        <position position="109"/>
    </location>
</feature>
<feature type="site" description="Important for enzyme activity" evidence="2">
    <location>
        <position position="212"/>
    </location>
</feature>
<comment type="function">
    <text evidence="1">Catalytic component of the polycomb repressive deubiquitinase (PR-DUB) complex, a complex that specifically mediates deubiquitination of histone H2A monoubiquitinated at 'Lys-119' (H2AK118ub1). Mediates bisymmetric organization of the PR-DUB complex and is involved in association with nucleosomes to mediate deubiquitination. Does not deubiquitinate monoubiquitinated histone H2B. Required to maintain the transcriptionally repressive state of homeotic genes throughout development. The PR-DUB complex has weak or no activity toward 'Lys-48'- and 'Lys-63'-linked polyubiquitin chains. Polycomb group (PcG) protein.</text>
</comment>
<comment type="catalytic activity">
    <reaction evidence="1">
        <text>Thiol-dependent hydrolysis of ester, thioester, amide, peptide and isopeptide bonds formed by the C-terminal Gly of ubiquitin (a 76-residue protein attached to proteins as an intracellular targeting signal).</text>
        <dbReference type="EC" id="3.4.19.12"/>
    </reaction>
</comment>
<comment type="subunit">
    <text evidence="1">Catalytic component of the polycomb repressive deubiquitinase (PR-DUB) complex, at least composed of caly/calypso, Asx and sba (MBD5/6 homolog). The PR-DUB complex associates with nucleosomes to mediate deubiquitination of histone H2AK118ub1 substrates; the association requires the positively charged C-terminal tail of caly, probably due to direct binding of DNA. Interacts (via ULD domain) with Asx (via DEUBAD domain); the interaction produces a stable heterodimer with a composite binding site for ubiquitin. Homodimerizes (via coiled-coil hinge-region between the UCH and ULD domains) to mediate assembly of 2 copies of the caly-Asx heterodimer into a bisymmetric tetramer; dimerization enhances PR-DUB association with nucleosomes.</text>
</comment>
<comment type="subcellular location">
    <subcellularLocation>
        <location evidence="1">Nucleus</location>
    </subcellularLocation>
    <text evidence="1">Localizes to PcG response elements (PREs).</text>
</comment>
<comment type="similarity">
    <text evidence="5">Belongs to the peptidase C12 family. BAP1 subfamily.</text>
</comment>
<protein>
    <recommendedName>
        <fullName evidence="1">Ubiquitin carboxyl-terminal hydrolase calypso</fullName>
        <ecNumber evidence="1">3.4.19.12</ecNumber>
    </recommendedName>
    <alternativeName>
        <fullName evidence="1">BRCA1-associated protein 1 homolog</fullName>
        <shortName evidence="1">BAP1 homolog</shortName>
    </alternativeName>
    <alternativeName>
        <fullName evidence="1">Polycomb group protein calypso</fullName>
    </alternativeName>
</protein>
<sequence>MNVAGGGTGTTAGSAGNNNTLPMAQLADGWLELESDPGLFTLLLEDFGCHDVQVEEVYDLQKPIESPYGFIFLFRWIEERRARRKIVETTAEIFVKDEEAISSIFFAQQVVPNSCATHALLSVLLNCNENNLQLGETLSRLKAHTKGMSPENKGLAIGNTPELACAHNSHAMPQARRRLERTGAGVASCRFTGEAFHFVSFVPINGQLFELDGLKPYPMNHGCWEEHEDWTDKFRRVMAERLGIATGEQDIRFNLMAVVPDRRIAITHKLKMLRTNQAIVSGTLQKLLKADEQGERDEQQRPDTPNTLLEPSAFTARDLQSLLKNLDTEIAINEQHLADENDRRQMFKVDASRRTHNYDKFICTFLTMLAHQGVLGELVSQHLLPSKKISGQSAANRLNKQNSAAASTANSSAGATAGGAKSQQQQQQQQQPQQPQTPKNGKSPGKTPGRRRKGRNKCRKRK</sequence>
<evidence type="ECO:0000250" key="1">
    <source>
        <dbReference type="UniProtKB" id="Q7K5N4"/>
    </source>
</evidence>
<evidence type="ECO:0000255" key="2">
    <source>
        <dbReference type="PROSITE-ProRule" id="PRU01393"/>
    </source>
</evidence>
<evidence type="ECO:0000255" key="3">
    <source>
        <dbReference type="PROSITE-ProRule" id="PRU01394"/>
    </source>
</evidence>
<evidence type="ECO:0000256" key="4">
    <source>
        <dbReference type="SAM" id="MobiDB-lite"/>
    </source>
</evidence>
<evidence type="ECO:0000305" key="5"/>
<proteinExistence type="inferred from homology"/>
<organism>
    <name type="scientific">Drosophila virilis</name>
    <name type="common">Fruit fly</name>
    <dbReference type="NCBI Taxonomy" id="7244"/>
    <lineage>
        <taxon>Eukaryota</taxon>
        <taxon>Metazoa</taxon>
        <taxon>Ecdysozoa</taxon>
        <taxon>Arthropoda</taxon>
        <taxon>Hexapoda</taxon>
        <taxon>Insecta</taxon>
        <taxon>Pterygota</taxon>
        <taxon>Neoptera</taxon>
        <taxon>Endopterygota</taxon>
        <taxon>Diptera</taxon>
        <taxon>Brachycera</taxon>
        <taxon>Muscomorpha</taxon>
        <taxon>Ephydroidea</taxon>
        <taxon>Drosophilidae</taxon>
        <taxon>Drosophila</taxon>
    </lineage>
</organism>
<name>CALYP_DROVI</name>
<dbReference type="EC" id="3.4.19.12" evidence="1"/>
<dbReference type="EMBL" id="CH940648">
    <property type="protein sequence ID" value="EDW60347.1"/>
    <property type="molecule type" value="Genomic_DNA"/>
</dbReference>
<dbReference type="RefSeq" id="XP_002049154.1">
    <property type="nucleotide sequence ID" value="XM_002049118.4"/>
</dbReference>
<dbReference type="SMR" id="B4LQ24"/>
<dbReference type="FunCoup" id="B4LQ24">
    <property type="interactions" value="1223"/>
</dbReference>
<dbReference type="STRING" id="7244.B4LQ24"/>
<dbReference type="MEROPS" id="C12.A09"/>
<dbReference type="EnsemblMetazoa" id="FBtr0236831">
    <property type="protein sequence ID" value="FBpp0235323"/>
    <property type="gene ID" value="FBgn0208042"/>
</dbReference>
<dbReference type="EnsemblMetazoa" id="XM_002049118.3">
    <property type="protein sequence ID" value="XP_002049154.1"/>
    <property type="gene ID" value="LOC6626878"/>
</dbReference>
<dbReference type="GeneID" id="6626878"/>
<dbReference type="KEGG" id="dvi:6626878"/>
<dbReference type="CTD" id="50632"/>
<dbReference type="eggNOG" id="KOG2778">
    <property type="taxonomic scope" value="Eukaryota"/>
</dbReference>
<dbReference type="HOGENOM" id="CLU_018316_2_1_1"/>
<dbReference type="InParanoid" id="B4LQ24"/>
<dbReference type="OMA" id="MNHGCWE"/>
<dbReference type="OrthoDB" id="1924260at2759"/>
<dbReference type="PhylomeDB" id="B4LQ24"/>
<dbReference type="Proteomes" id="UP000008792">
    <property type="component" value="Unassembled WGS sequence"/>
</dbReference>
<dbReference type="GO" id="GO:0000785">
    <property type="term" value="C:chromatin"/>
    <property type="evidence" value="ECO:0000250"/>
    <property type="project" value="UniProtKB"/>
</dbReference>
<dbReference type="GO" id="GO:0005737">
    <property type="term" value="C:cytoplasm"/>
    <property type="evidence" value="ECO:0007669"/>
    <property type="project" value="TreeGrafter"/>
</dbReference>
<dbReference type="GO" id="GO:0035517">
    <property type="term" value="C:PR-DUB complex"/>
    <property type="evidence" value="ECO:0000250"/>
    <property type="project" value="UniProtKB"/>
</dbReference>
<dbReference type="GO" id="GO:0003682">
    <property type="term" value="F:chromatin binding"/>
    <property type="evidence" value="ECO:0000250"/>
    <property type="project" value="UniProtKB"/>
</dbReference>
<dbReference type="GO" id="GO:0004843">
    <property type="term" value="F:cysteine-type deubiquitinase activity"/>
    <property type="evidence" value="ECO:0000250"/>
    <property type="project" value="UniProtKB"/>
</dbReference>
<dbReference type="GO" id="GO:0040029">
    <property type="term" value="P:epigenetic regulation of gene expression"/>
    <property type="evidence" value="ECO:0000250"/>
    <property type="project" value="UniProtKB"/>
</dbReference>
<dbReference type="GO" id="GO:0031507">
    <property type="term" value="P:heterochromatin formation"/>
    <property type="evidence" value="ECO:0000250"/>
    <property type="project" value="UniProtKB"/>
</dbReference>
<dbReference type="GO" id="GO:0016579">
    <property type="term" value="P:protein deubiquitination"/>
    <property type="evidence" value="ECO:0007669"/>
    <property type="project" value="TreeGrafter"/>
</dbReference>
<dbReference type="GO" id="GO:0007385">
    <property type="term" value="P:specification of segmental identity, abdomen"/>
    <property type="evidence" value="ECO:0007669"/>
    <property type="project" value="EnsemblMetazoa"/>
</dbReference>
<dbReference type="GO" id="GO:0006511">
    <property type="term" value="P:ubiquitin-dependent protein catabolic process"/>
    <property type="evidence" value="ECO:0007669"/>
    <property type="project" value="InterPro"/>
</dbReference>
<dbReference type="CDD" id="cd09617">
    <property type="entry name" value="Peptidase_C12_UCH37_BAP1"/>
    <property type="match status" value="1"/>
</dbReference>
<dbReference type="FunFam" id="3.40.532.10:FF:000002">
    <property type="entry name" value="Ubiquitin carboxyl-terminal hydrolase"/>
    <property type="match status" value="1"/>
</dbReference>
<dbReference type="Gene3D" id="1.20.58.860">
    <property type="match status" value="1"/>
</dbReference>
<dbReference type="Gene3D" id="3.40.532.10">
    <property type="entry name" value="Peptidase C12, ubiquitin carboxyl-terminal hydrolase"/>
    <property type="match status" value="1"/>
</dbReference>
<dbReference type="InterPro" id="IPR038765">
    <property type="entry name" value="Papain-like_cys_pep_sf"/>
</dbReference>
<dbReference type="InterPro" id="IPR001578">
    <property type="entry name" value="Peptidase_C12_UCH"/>
</dbReference>
<dbReference type="InterPro" id="IPR036959">
    <property type="entry name" value="Peptidase_C12_UCH_sf"/>
</dbReference>
<dbReference type="InterPro" id="IPR041507">
    <property type="entry name" value="UCH_C"/>
</dbReference>
<dbReference type="PANTHER" id="PTHR10589">
    <property type="entry name" value="UBIQUITIN CARBOXYL-TERMINAL HYDROLASE"/>
    <property type="match status" value="1"/>
</dbReference>
<dbReference type="PANTHER" id="PTHR10589:SF28">
    <property type="entry name" value="UBIQUITIN CARBOXYL-TERMINAL HYDROLASE BAP1"/>
    <property type="match status" value="1"/>
</dbReference>
<dbReference type="Pfam" id="PF01088">
    <property type="entry name" value="Peptidase_C12"/>
    <property type="match status" value="1"/>
</dbReference>
<dbReference type="Pfam" id="PF18031">
    <property type="entry name" value="UCH_C"/>
    <property type="match status" value="1"/>
</dbReference>
<dbReference type="PRINTS" id="PR00707">
    <property type="entry name" value="UBCTHYDRLASE"/>
</dbReference>
<dbReference type="SUPFAM" id="SSF54001">
    <property type="entry name" value="Cysteine proteinases"/>
    <property type="match status" value="1"/>
</dbReference>
<dbReference type="PROSITE" id="PS52048">
    <property type="entry name" value="UCH_DOMAIN"/>
    <property type="match status" value="1"/>
</dbReference>
<dbReference type="PROSITE" id="PS52049">
    <property type="entry name" value="ULD"/>
    <property type="match status" value="1"/>
</dbReference>
<gene>
    <name evidence="1" type="primary">caly</name>
    <name evidence="1" type="synonym">BAP1</name>
    <name type="ORF">GJ20906</name>
</gene>